<proteinExistence type="inferred from homology"/>
<gene>
    <name evidence="1" type="primary">nudC</name>
    <name type="ordered locus">ECIAI39_4386</name>
</gene>
<accession>B7NRS9</accession>
<name>NUDC_ECO7I</name>
<reference key="1">
    <citation type="journal article" date="2009" name="PLoS Genet.">
        <title>Organised genome dynamics in the Escherichia coli species results in highly diverse adaptive paths.</title>
        <authorList>
            <person name="Touchon M."/>
            <person name="Hoede C."/>
            <person name="Tenaillon O."/>
            <person name="Barbe V."/>
            <person name="Baeriswyl S."/>
            <person name="Bidet P."/>
            <person name="Bingen E."/>
            <person name="Bonacorsi S."/>
            <person name="Bouchier C."/>
            <person name="Bouvet O."/>
            <person name="Calteau A."/>
            <person name="Chiapello H."/>
            <person name="Clermont O."/>
            <person name="Cruveiller S."/>
            <person name="Danchin A."/>
            <person name="Diard M."/>
            <person name="Dossat C."/>
            <person name="Karoui M.E."/>
            <person name="Frapy E."/>
            <person name="Garry L."/>
            <person name="Ghigo J.M."/>
            <person name="Gilles A.M."/>
            <person name="Johnson J."/>
            <person name="Le Bouguenec C."/>
            <person name="Lescat M."/>
            <person name="Mangenot S."/>
            <person name="Martinez-Jehanne V."/>
            <person name="Matic I."/>
            <person name="Nassif X."/>
            <person name="Oztas S."/>
            <person name="Petit M.A."/>
            <person name="Pichon C."/>
            <person name="Rouy Z."/>
            <person name="Ruf C.S."/>
            <person name="Schneider D."/>
            <person name="Tourret J."/>
            <person name="Vacherie B."/>
            <person name="Vallenet D."/>
            <person name="Medigue C."/>
            <person name="Rocha E.P.C."/>
            <person name="Denamur E."/>
        </authorList>
    </citation>
    <scope>NUCLEOTIDE SEQUENCE [LARGE SCALE GENOMIC DNA]</scope>
    <source>
        <strain>IAI39 / ExPEC</strain>
    </source>
</reference>
<dbReference type="EC" id="3.6.1.-" evidence="1"/>
<dbReference type="EC" id="3.6.1.22" evidence="1"/>
<dbReference type="EMBL" id="CU928164">
    <property type="protein sequence ID" value="CAR20492.1"/>
    <property type="molecule type" value="Genomic_DNA"/>
</dbReference>
<dbReference type="RefSeq" id="WP_000373941.1">
    <property type="nucleotide sequence ID" value="NC_011750.1"/>
</dbReference>
<dbReference type="RefSeq" id="YP_002410260.1">
    <property type="nucleotide sequence ID" value="NC_011750.1"/>
</dbReference>
<dbReference type="SMR" id="B7NRS9"/>
<dbReference type="STRING" id="585057.ECIAI39_4386"/>
<dbReference type="KEGG" id="ect:ECIAI39_4386"/>
<dbReference type="PATRIC" id="fig|585057.6.peg.4532"/>
<dbReference type="HOGENOM" id="CLU_037162_0_1_6"/>
<dbReference type="Proteomes" id="UP000000749">
    <property type="component" value="Chromosome"/>
</dbReference>
<dbReference type="GO" id="GO:0005829">
    <property type="term" value="C:cytosol"/>
    <property type="evidence" value="ECO:0007669"/>
    <property type="project" value="TreeGrafter"/>
</dbReference>
<dbReference type="GO" id="GO:0000287">
    <property type="term" value="F:magnesium ion binding"/>
    <property type="evidence" value="ECO:0007669"/>
    <property type="project" value="UniProtKB-UniRule"/>
</dbReference>
<dbReference type="GO" id="GO:0030145">
    <property type="term" value="F:manganese ion binding"/>
    <property type="evidence" value="ECO:0007669"/>
    <property type="project" value="UniProtKB-UniRule"/>
</dbReference>
<dbReference type="GO" id="GO:0000210">
    <property type="term" value="F:NAD+ diphosphatase activity"/>
    <property type="evidence" value="ECO:0007669"/>
    <property type="project" value="UniProtKB-UniRule"/>
</dbReference>
<dbReference type="GO" id="GO:0035529">
    <property type="term" value="F:NADH pyrophosphatase activity"/>
    <property type="evidence" value="ECO:0007669"/>
    <property type="project" value="TreeGrafter"/>
</dbReference>
<dbReference type="GO" id="GO:0110153">
    <property type="term" value="F:RNA NAD-cap (NMN-forming) hydrolase activity"/>
    <property type="evidence" value="ECO:0007669"/>
    <property type="project" value="RHEA"/>
</dbReference>
<dbReference type="GO" id="GO:0008270">
    <property type="term" value="F:zinc ion binding"/>
    <property type="evidence" value="ECO:0007669"/>
    <property type="project" value="UniProtKB-UniRule"/>
</dbReference>
<dbReference type="GO" id="GO:0019677">
    <property type="term" value="P:NAD catabolic process"/>
    <property type="evidence" value="ECO:0007669"/>
    <property type="project" value="TreeGrafter"/>
</dbReference>
<dbReference type="GO" id="GO:0006734">
    <property type="term" value="P:NADH metabolic process"/>
    <property type="evidence" value="ECO:0007669"/>
    <property type="project" value="TreeGrafter"/>
</dbReference>
<dbReference type="GO" id="GO:0006742">
    <property type="term" value="P:NADP catabolic process"/>
    <property type="evidence" value="ECO:0007669"/>
    <property type="project" value="TreeGrafter"/>
</dbReference>
<dbReference type="CDD" id="cd03429">
    <property type="entry name" value="NUDIX_NADH_pyrophosphatase_Nudt13"/>
    <property type="match status" value="1"/>
</dbReference>
<dbReference type="FunFam" id="3.90.79.10:FF:000004">
    <property type="entry name" value="NADH pyrophosphatase"/>
    <property type="match status" value="1"/>
</dbReference>
<dbReference type="FunFam" id="3.90.79.20:FF:000001">
    <property type="entry name" value="NADH pyrophosphatase"/>
    <property type="match status" value="1"/>
</dbReference>
<dbReference type="Gene3D" id="3.90.79.20">
    <property type="match status" value="1"/>
</dbReference>
<dbReference type="Gene3D" id="3.90.79.10">
    <property type="entry name" value="Nucleoside Triphosphate Pyrophosphohydrolase"/>
    <property type="match status" value="1"/>
</dbReference>
<dbReference type="HAMAP" id="MF_00297">
    <property type="entry name" value="Nudix_NudC"/>
    <property type="match status" value="1"/>
</dbReference>
<dbReference type="InterPro" id="IPR050241">
    <property type="entry name" value="NAD-cap_RNA_hydrolase_NudC"/>
</dbReference>
<dbReference type="InterPro" id="IPR049734">
    <property type="entry name" value="NudC-like_C"/>
</dbReference>
<dbReference type="InterPro" id="IPR015797">
    <property type="entry name" value="NUDIX_hydrolase-like_dom_sf"/>
</dbReference>
<dbReference type="InterPro" id="IPR020084">
    <property type="entry name" value="NUDIX_hydrolase_CS"/>
</dbReference>
<dbReference type="InterPro" id="IPR000086">
    <property type="entry name" value="NUDIX_hydrolase_dom"/>
</dbReference>
<dbReference type="InterPro" id="IPR022925">
    <property type="entry name" value="RNA_Hydrolase_NudC"/>
</dbReference>
<dbReference type="InterPro" id="IPR015376">
    <property type="entry name" value="Znr_NADH_PPase"/>
</dbReference>
<dbReference type="NCBIfam" id="NF001299">
    <property type="entry name" value="PRK00241.1"/>
    <property type="match status" value="1"/>
</dbReference>
<dbReference type="PANTHER" id="PTHR42904:SF6">
    <property type="entry name" value="NAD-CAPPED RNA HYDROLASE NUDT12"/>
    <property type="match status" value="1"/>
</dbReference>
<dbReference type="PANTHER" id="PTHR42904">
    <property type="entry name" value="NUDIX HYDROLASE, NUDC SUBFAMILY"/>
    <property type="match status" value="1"/>
</dbReference>
<dbReference type="Pfam" id="PF00293">
    <property type="entry name" value="NUDIX"/>
    <property type="match status" value="1"/>
</dbReference>
<dbReference type="Pfam" id="PF09297">
    <property type="entry name" value="Zn_ribbon_NUD"/>
    <property type="match status" value="1"/>
</dbReference>
<dbReference type="SUPFAM" id="SSF55811">
    <property type="entry name" value="Nudix"/>
    <property type="match status" value="2"/>
</dbReference>
<dbReference type="PROSITE" id="PS51462">
    <property type="entry name" value="NUDIX"/>
    <property type="match status" value="1"/>
</dbReference>
<dbReference type="PROSITE" id="PS00893">
    <property type="entry name" value="NUDIX_BOX"/>
    <property type="match status" value="1"/>
</dbReference>
<evidence type="ECO:0000255" key="1">
    <source>
        <dbReference type="HAMAP-Rule" id="MF_00297"/>
    </source>
</evidence>
<protein>
    <recommendedName>
        <fullName evidence="1">NAD-capped RNA hydrolase NudC</fullName>
        <shortName evidence="1">DeNADding enzyme NudC</shortName>
        <ecNumber evidence="1">3.6.1.-</ecNumber>
    </recommendedName>
    <alternativeName>
        <fullName evidence="1">NADH pyrophosphatase</fullName>
        <ecNumber evidence="1">3.6.1.22</ecNumber>
    </alternativeName>
</protein>
<sequence>MDRIIEKLDHGWWVVSHEQKLWLPKGELPYGEAANFDLVGQRALQIGEWQGEPVWLVQQQRRHDMGSVRQVIDLDVGLFQLAGRGVQLAEFYRSHKYCGYCGHEMYPSKTEWAMLCSHCRERYYPQIAPCIIVAIRRDDSILLAQHTRHRNGVHTVLAGFVEVGETLEQAVAREVMEESGIKVKNLRYVTSQPWPFPQSLMTAFMAEYDSGEIVIDPKELLEANWYRYDDLPLLPPPGTVARRLIEDTVAMCRAEYE</sequence>
<comment type="function">
    <text evidence="1">mRNA decapping enzyme that specifically removes the nicotinamide adenine dinucleotide (NAD) cap from a subset of mRNAs by hydrolyzing the diphosphate linkage to produce nicotinamide mononucleotide (NMN) and 5' monophosphate mRNA. The NAD-cap is present at the 5'-end of some mRNAs and stabilizes RNA against 5'-processing. Has preference for mRNAs with a 5'-end purine. Catalyzes the hydrolysis of a broad range of dinucleotide pyrophosphates.</text>
</comment>
<comment type="catalytic activity">
    <reaction evidence="1">
        <text>a 5'-end NAD(+)-phospho-ribonucleoside in mRNA + H2O = a 5'-end phospho-adenosine-phospho-ribonucleoside in mRNA + beta-nicotinamide D-ribonucleotide + 2 H(+)</text>
        <dbReference type="Rhea" id="RHEA:60876"/>
        <dbReference type="Rhea" id="RHEA-COMP:15698"/>
        <dbReference type="Rhea" id="RHEA-COMP:15719"/>
        <dbReference type="ChEBI" id="CHEBI:14649"/>
        <dbReference type="ChEBI" id="CHEBI:15377"/>
        <dbReference type="ChEBI" id="CHEBI:15378"/>
        <dbReference type="ChEBI" id="CHEBI:144029"/>
        <dbReference type="ChEBI" id="CHEBI:144051"/>
    </reaction>
    <physiologicalReaction direction="left-to-right" evidence="1">
        <dbReference type="Rhea" id="RHEA:60877"/>
    </physiologicalReaction>
</comment>
<comment type="catalytic activity">
    <reaction evidence="1">
        <text>NAD(+) + H2O = beta-nicotinamide D-ribonucleotide + AMP + 2 H(+)</text>
        <dbReference type="Rhea" id="RHEA:11800"/>
        <dbReference type="ChEBI" id="CHEBI:14649"/>
        <dbReference type="ChEBI" id="CHEBI:15377"/>
        <dbReference type="ChEBI" id="CHEBI:15378"/>
        <dbReference type="ChEBI" id="CHEBI:57540"/>
        <dbReference type="ChEBI" id="CHEBI:456215"/>
        <dbReference type="EC" id="3.6.1.22"/>
    </reaction>
</comment>
<comment type="catalytic activity">
    <reaction evidence="1">
        <text>NADH + H2O = reduced beta-nicotinamide D-ribonucleotide + AMP + 2 H(+)</text>
        <dbReference type="Rhea" id="RHEA:48868"/>
        <dbReference type="ChEBI" id="CHEBI:15377"/>
        <dbReference type="ChEBI" id="CHEBI:15378"/>
        <dbReference type="ChEBI" id="CHEBI:57945"/>
        <dbReference type="ChEBI" id="CHEBI:90832"/>
        <dbReference type="ChEBI" id="CHEBI:456215"/>
        <dbReference type="EC" id="3.6.1.22"/>
    </reaction>
</comment>
<comment type="cofactor">
    <cofactor evidence="1">
        <name>Mg(2+)</name>
        <dbReference type="ChEBI" id="CHEBI:18420"/>
    </cofactor>
    <cofactor evidence="1">
        <name>Mn(2+)</name>
        <dbReference type="ChEBI" id="CHEBI:29035"/>
    </cofactor>
    <text evidence="1">Divalent metal cations. Mg(2+) or Mn(2+).</text>
</comment>
<comment type="cofactor">
    <cofactor evidence="1">
        <name>Zn(2+)</name>
        <dbReference type="ChEBI" id="CHEBI:29105"/>
    </cofactor>
    <text evidence="1">Binds 1 zinc ion per subunit.</text>
</comment>
<comment type="subunit">
    <text evidence="1">Homodimer.</text>
</comment>
<comment type="similarity">
    <text evidence="1">Belongs to the Nudix hydrolase family. NudC subfamily.</text>
</comment>
<organism>
    <name type="scientific">Escherichia coli O7:K1 (strain IAI39 / ExPEC)</name>
    <dbReference type="NCBI Taxonomy" id="585057"/>
    <lineage>
        <taxon>Bacteria</taxon>
        <taxon>Pseudomonadati</taxon>
        <taxon>Pseudomonadota</taxon>
        <taxon>Gammaproteobacteria</taxon>
        <taxon>Enterobacterales</taxon>
        <taxon>Enterobacteriaceae</taxon>
        <taxon>Escherichia</taxon>
    </lineage>
</organism>
<feature type="chain" id="PRO_1000119461" description="NAD-capped RNA hydrolase NudC">
    <location>
        <begin position="1"/>
        <end position="257"/>
    </location>
</feature>
<feature type="domain" description="Nudix hydrolase" evidence="1">
    <location>
        <begin position="125"/>
        <end position="248"/>
    </location>
</feature>
<feature type="short sequence motif" description="Nudix box" evidence="1">
    <location>
        <begin position="159"/>
        <end position="180"/>
    </location>
</feature>
<feature type="binding site" evidence="1">
    <location>
        <position position="25"/>
    </location>
    <ligand>
        <name>substrate</name>
    </ligand>
</feature>
<feature type="binding site" evidence="1">
    <location>
        <position position="69"/>
    </location>
    <ligand>
        <name>substrate</name>
    </ligand>
</feature>
<feature type="binding site" evidence="1">
    <location>
        <position position="98"/>
    </location>
    <ligand>
        <name>Zn(2+)</name>
        <dbReference type="ChEBI" id="CHEBI:29105"/>
    </ligand>
</feature>
<feature type="binding site" evidence="1">
    <location>
        <position position="101"/>
    </location>
    <ligand>
        <name>Zn(2+)</name>
        <dbReference type="ChEBI" id="CHEBI:29105"/>
    </ligand>
</feature>
<feature type="binding site" evidence="1">
    <location>
        <position position="111"/>
    </location>
    <ligand>
        <name>substrate</name>
    </ligand>
</feature>
<feature type="binding site" evidence="1">
    <location>
        <position position="116"/>
    </location>
    <ligand>
        <name>Zn(2+)</name>
        <dbReference type="ChEBI" id="CHEBI:29105"/>
    </ligand>
</feature>
<feature type="binding site" evidence="1">
    <location>
        <position position="119"/>
    </location>
    <ligand>
        <name>Zn(2+)</name>
        <dbReference type="ChEBI" id="CHEBI:29105"/>
    </ligand>
</feature>
<feature type="binding site" evidence="1">
    <location>
        <position position="124"/>
    </location>
    <ligand>
        <name>substrate</name>
    </ligand>
</feature>
<feature type="binding site" evidence="1">
    <location>
        <position position="158"/>
    </location>
    <ligand>
        <name>a divalent metal cation</name>
        <dbReference type="ChEBI" id="CHEBI:60240"/>
        <label>1</label>
    </ligand>
</feature>
<feature type="binding site" evidence="1">
    <location>
        <position position="174"/>
    </location>
    <ligand>
        <name>a divalent metal cation</name>
        <dbReference type="ChEBI" id="CHEBI:60240"/>
        <label>2</label>
    </ligand>
</feature>
<feature type="binding site" evidence="1">
    <location>
        <position position="174"/>
    </location>
    <ligand>
        <name>a divalent metal cation</name>
        <dbReference type="ChEBI" id="CHEBI:60240"/>
        <label>3</label>
    </ligand>
</feature>
<feature type="binding site" evidence="1">
    <location>
        <position position="178"/>
    </location>
    <ligand>
        <name>a divalent metal cation</name>
        <dbReference type="ChEBI" id="CHEBI:60240"/>
        <label>1</label>
    </ligand>
</feature>
<feature type="binding site" evidence="1">
    <location>
        <position position="178"/>
    </location>
    <ligand>
        <name>a divalent metal cation</name>
        <dbReference type="ChEBI" id="CHEBI:60240"/>
        <label>3</label>
    </ligand>
</feature>
<feature type="binding site" evidence="1">
    <location>
        <begin position="192"/>
        <end position="199"/>
    </location>
    <ligand>
        <name>substrate</name>
    </ligand>
</feature>
<feature type="binding site" evidence="1">
    <location>
        <position position="219"/>
    </location>
    <ligand>
        <name>a divalent metal cation</name>
        <dbReference type="ChEBI" id="CHEBI:60240"/>
        <label>1</label>
    </ligand>
</feature>
<feature type="binding site" evidence="1">
    <location>
        <position position="219"/>
    </location>
    <ligand>
        <name>a divalent metal cation</name>
        <dbReference type="ChEBI" id="CHEBI:60240"/>
        <label>3</label>
    </ligand>
</feature>
<feature type="binding site" evidence="1">
    <location>
        <position position="241"/>
    </location>
    <ligand>
        <name>substrate</name>
    </ligand>
</feature>
<keyword id="KW-0378">Hydrolase</keyword>
<keyword id="KW-0460">Magnesium</keyword>
<keyword id="KW-0464">Manganese</keyword>
<keyword id="KW-0479">Metal-binding</keyword>
<keyword id="KW-0520">NAD</keyword>
<keyword id="KW-0862">Zinc</keyword>